<organism>
    <name type="scientific">Bacillus cereus (strain ZK / E33L)</name>
    <dbReference type="NCBI Taxonomy" id="288681"/>
    <lineage>
        <taxon>Bacteria</taxon>
        <taxon>Bacillati</taxon>
        <taxon>Bacillota</taxon>
        <taxon>Bacilli</taxon>
        <taxon>Bacillales</taxon>
        <taxon>Bacillaceae</taxon>
        <taxon>Bacillus</taxon>
        <taxon>Bacillus cereus group</taxon>
    </lineage>
</organism>
<gene>
    <name evidence="1" type="primary">coaE</name>
    <name type="ordered locus">BCE33L4325</name>
</gene>
<feature type="chain" id="PRO_0000243256" description="Dephospho-CoA kinase">
    <location>
        <begin position="1"/>
        <end position="200"/>
    </location>
</feature>
<feature type="domain" description="DPCK" evidence="1">
    <location>
        <begin position="4"/>
        <end position="200"/>
    </location>
</feature>
<feature type="binding site" evidence="1">
    <location>
        <begin position="12"/>
        <end position="17"/>
    </location>
    <ligand>
        <name>ATP</name>
        <dbReference type="ChEBI" id="CHEBI:30616"/>
    </ligand>
</feature>
<accession>Q633L3</accession>
<proteinExistence type="inferred from homology"/>
<sequence>MTVVIGLTGGIASGKSTVSQMFRELSIPVIDADIIAREVVEKGKPAYNKIVEVFGTEVLQEDGELDRPKLGSVVFHNEEKRLQLNKIVHPAVHEEMNRQKEMYIKEGMQAVVLDIPLLFESKLTSLVDRVLVVAVKPHTQLERLMKRNNFSEEEATARIQSQMSLEEKVKNADEVINNDGTIMGTKTQLQAILKKWNIID</sequence>
<protein>
    <recommendedName>
        <fullName evidence="1">Dephospho-CoA kinase</fullName>
        <ecNumber evidence="1">2.7.1.24</ecNumber>
    </recommendedName>
    <alternativeName>
        <fullName evidence="1">Dephosphocoenzyme A kinase</fullName>
    </alternativeName>
</protein>
<comment type="function">
    <text evidence="1">Catalyzes the phosphorylation of the 3'-hydroxyl group of dephosphocoenzyme A to form coenzyme A.</text>
</comment>
<comment type="catalytic activity">
    <reaction evidence="1">
        <text>3'-dephospho-CoA + ATP = ADP + CoA + H(+)</text>
        <dbReference type="Rhea" id="RHEA:18245"/>
        <dbReference type="ChEBI" id="CHEBI:15378"/>
        <dbReference type="ChEBI" id="CHEBI:30616"/>
        <dbReference type="ChEBI" id="CHEBI:57287"/>
        <dbReference type="ChEBI" id="CHEBI:57328"/>
        <dbReference type="ChEBI" id="CHEBI:456216"/>
        <dbReference type="EC" id="2.7.1.24"/>
    </reaction>
</comment>
<comment type="pathway">
    <text evidence="1">Cofactor biosynthesis; coenzyme A biosynthesis; CoA from (R)-pantothenate: step 5/5.</text>
</comment>
<comment type="subcellular location">
    <subcellularLocation>
        <location evidence="1">Cytoplasm</location>
    </subcellularLocation>
</comment>
<comment type="similarity">
    <text evidence="1">Belongs to the CoaE family.</text>
</comment>
<reference key="1">
    <citation type="journal article" date="2006" name="J. Bacteriol.">
        <title>Pathogenomic sequence analysis of Bacillus cereus and Bacillus thuringiensis isolates closely related to Bacillus anthracis.</title>
        <authorList>
            <person name="Han C.S."/>
            <person name="Xie G."/>
            <person name="Challacombe J.F."/>
            <person name="Altherr M.R."/>
            <person name="Bhotika S.S."/>
            <person name="Bruce D."/>
            <person name="Campbell C.S."/>
            <person name="Campbell M.L."/>
            <person name="Chen J."/>
            <person name="Chertkov O."/>
            <person name="Cleland C."/>
            <person name="Dimitrijevic M."/>
            <person name="Doggett N.A."/>
            <person name="Fawcett J.J."/>
            <person name="Glavina T."/>
            <person name="Goodwin L.A."/>
            <person name="Hill K.K."/>
            <person name="Hitchcock P."/>
            <person name="Jackson P.J."/>
            <person name="Keim P."/>
            <person name="Kewalramani A.R."/>
            <person name="Longmire J."/>
            <person name="Lucas S."/>
            <person name="Malfatti S."/>
            <person name="McMurry K."/>
            <person name="Meincke L.J."/>
            <person name="Misra M."/>
            <person name="Moseman B.L."/>
            <person name="Mundt M."/>
            <person name="Munk A.C."/>
            <person name="Okinaka R.T."/>
            <person name="Parson-Quintana B."/>
            <person name="Reilly L.P."/>
            <person name="Richardson P."/>
            <person name="Robinson D.L."/>
            <person name="Rubin E."/>
            <person name="Saunders E."/>
            <person name="Tapia R."/>
            <person name="Tesmer J.G."/>
            <person name="Thayer N."/>
            <person name="Thompson L.S."/>
            <person name="Tice H."/>
            <person name="Ticknor L.O."/>
            <person name="Wills P.L."/>
            <person name="Brettin T.S."/>
            <person name="Gilna P."/>
        </authorList>
    </citation>
    <scope>NUCLEOTIDE SEQUENCE [LARGE SCALE GENOMIC DNA]</scope>
    <source>
        <strain>ZK / E33L</strain>
    </source>
</reference>
<evidence type="ECO:0000255" key="1">
    <source>
        <dbReference type="HAMAP-Rule" id="MF_00376"/>
    </source>
</evidence>
<name>COAE_BACCZ</name>
<keyword id="KW-0067">ATP-binding</keyword>
<keyword id="KW-0173">Coenzyme A biosynthesis</keyword>
<keyword id="KW-0963">Cytoplasm</keyword>
<keyword id="KW-0418">Kinase</keyword>
<keyword id="KW-0547">Nucleotide-binding</keyword>
<keyword id="KW-0808">Transferase</keyword>
<dbReference type="EC" id="2.7.1.24" evidence="1"/>
<dbReference type="EMBL" id="CP000001">
    <property type="protein sequence ID" value="AAU15945.1"/>
    <property type="molecule type" value="Genomic_DNA"/>
</dbReference>
<dbReference type="RefSeq" id="WP_000219298.1">
    <property type="nucleotide sequence ID" value="NC_006274.1"/>
</dbReference>
<dbReference type="SMR" id="Q633L3"/>
<dbReference type="KEGG" id="bcz:BCE33L4325"/>
<dbReference type="PATRIC" id="fig|288681.22.peg.1048"/>
<dbReference type="UniPathway" id="UPA00241">
    <property type="reaction ID" value="UER00356"/>
</dbReference>
<dbReference type="Proteomes" id="UP000002612">
    <property type="component" value="Chromosome"/>
</dbReference>
<dbReference type="GO" id="GO:0005737">
    <property type="term" value="C:cytoplasm"/>
    <property type="evidence" value="ECO:0007669"/>
    <property type="project" value="UniProtKB-SubCell"/>
</dbReference>
<dbReference type="GO" id="GO:0005524">
    <property type="term" value="F:ATP binding"/>
    <property type="evidence" value="ECO:0007669"/>
    <property type="project" value="UniProtKB-UniRule"/>
</dbReference>
<dbReference type="GO" id="GO:0004140">
    <property type="term" value="F:dephospho-CoA kinase activity"/>
    <property type="evidence" value="ECO:0007669"/>
    <property type="project" value="UniProtKB-UniRule"/>
</dbReference>
<dbReference type="GO" id="GO:0015937">
    <property type="term" value="P:coenzyme A biosynthetic process"/>
    <property type="evidence" value="ECO:0007669"/>
    <property type="project" value="UniProtKB-UniRule"/>
</dbReference>
<dbReference type="CDD" id="cd02022">
    <property type="entry name" value="DPCK"/>
    <property type="match status" value="1"/>
</dbReference>
<dbReference type="FunFam" id="3.40.50.300:FF:000485">
    <property type="entry name" value="Dephospho-CoA kinase CAB5"/>
    <property type="match status" value="1"/>
</dbReference>
<dbReference type="Gene3D" id="3.40.50.300">
    <property type="entry name" value="P-loop containing nucleotide triphosphate hydrolases"/>
    <property type="match status" value="1"/>
</dbReference>
<dbReference type="HAMAP" id="MF_00376">
    <property type="entry name" value="Dephospho_CoA_kinase"/>
    <property type="match status" value="1"/>
</dbReference>
<dbReference type="InterPro" id="IPR001977">
    <property type="entry name" value="Depp_CoAkinase"/>
</dbReference>
<dbReference type="InterPro" id="IPR027417">
    <property type="entry name" value="P-loop_NTPase"/>
</dbReference>
<dbReference type="NCBIfam" id="TIGR00152">
    <property type="entry name" value="dephospho-CoA kinase"/>
    <property type="match status" value="1"/>
</dbReference>
<dbReference type="PANTHER" id="PTHR10695:SF46">
    <property type="entry name" value="BIFUNCTIONAL COENZYME A SYNTHASE-RELATED"/>
    <property type="match status" value="1"/>
</dbReference>
<dbReference type="PANTHER" id="PTHR10695">
    <property type="entry name" value="DEPHOSPHO-COA KINASE-RELATED"/>
    <property type="match status" value="1"/>
</dbReference>
<dbReference type="Pfam" id="PF01121">
    <property type="entry name" value="CoaE"/>
    <property type="match status" value="1"/>
</dbReference>
<dbReference type="SUPFAM" id="SSF52540">
    <property type="entry name" value="P-loop containing nucleoside triphosphate hydrolases"/>
    <property type="match status" value="1"/>
</dbReference>
<dbReference type="PROSITE" id="PS51219">
    <property type="entry name" value="DPCK"/>
    <property type="match status" value="1"/>
</dbReference>